<organism>
    <name type="scientific">Conus radiatus</name>
    <name type="common">Rayed cone</name>
    <dbReference type="NCBI Taxonomy" id="61198"/>
    <lineage>
        <taxon>Eukaryota</taxon>
        <taxon>Metazoa</taxon>
        <taxon>Spiralia</taxon>
        <taxon>Lophotrochozoa</taxon>
        <taxon>Mollusca</taxon>
        <taxon>Gastropoda</taxon>
        <taxon>Caenogastropoda</taxon>
        <taxon>Neogastropoda</taxon>
        <taxon>Conoidea</taxon>
        <taxon>Conidae</taxon>
        <taxon>Conus</taxon>
        <taxon>Phasmoconus</taxon>
    </lineage>
</organism>
<reference key="1">
    <citation type="patent" date="1991-09-24" number="US5051403">
        <title>Method of treating ischemia-related neuronal damage.</title>
        <authorList>
            <person name="Miljanich G.P."/>
            <person name="Bitner R.S."/>
            <person name="Bowersox S.S."/>
            <person name="Fox J.A."/>
            <person name="Valentino K.L."/>
            <person name="Yamashiro D.H."/>
        </authorList>
    </citation>
    <scope>PROTEIN SEQUENCE</scope>
    <scope>HYDROXYLATION AT PRO-4 AND PRO-7</scope>
</reference>
<evidence type="ECO:0000269" key="1">
    <source ref="1"/>
</evidence>
<evidence type="ECO:0000305" key="2"/>
<accession>P58914</accession>
<feature type="peptide" id="PRO_0000044478" description="Omega-conotoxin RVIA">
    <location>
        <begin position="1"/>
        <end position="27"/>
    </location>
</feature>
<feature type="modified residue" description="4-hydroxyproline" evidence="1">
    <location>
        <position position="4"/>
    </location>
</feature>
<feature type="modified residue" description="4-hydroxyproline" evidence="1">
    <location>
        <position position="7"/>
    </location>
</feature>
<feature type="disulfide bond">
    <location>
        <begin position="1"/>
        <end position="16"/>
    </location>
</feature>
<feature type="disulfide bond">
    <location>
        <begin position="8"/>
        <end position="19"/>
    </location>
</feature>
<feature type="disulfide bond">
    <location>
        <begin position="15"/>
        <end position="26"/>
    </location>
</feature>
<proteinExistence type="evidence at protein level"/>
<comment type="function">
    <text>Omega-conotoxins act at presynaptic membranes, they bind and block voltage-gated calcium channels (Cav).</text>
</comment>
<comment type="subcellular location">
    <subcellularLocation>
        <location>Secreted</location>
    </subcellularLocation>
</comment>
<comment type="tissue specificity">
    <text>Expressed by the venom duct.</text>
</comment>
<comment type="domain">
    <text>The presence of a 'disulfide through disulfide knot' structurally defines this protein as a knottin.</text>
</comment>
<comment type="domain">
    <text>The cysteine framework is VI/VII (C-C-CC-C-C).</text>
</comment>
<comment type="similarity">
    <text evidence="2">Belongs to the conotoxin O1 superfamily.</text>
</comment>
<sequence length="27" mass="2887">CKPPGSPCRVSSYNCCSSCKSYNKKCG</sequence>
<dbReference type="SMR" id="P58914"/>
<dbReference type="ConoServer" id="1728">
    <property type="toxin name" value="RVIA"/>
</dbReference>
<dbReference type="GO" id="GO:0005576">
    <property type="term" value="C:extracellular region"/>
    <property type="evidence" value="ECO:0007669"/>
    <property type="project" value="UniProtKB-SubCell"/>
</dbReference>
<dbReference type="GO" id="GO:0044231">
    <property type="term" value="C:host cell presynaptic membrane"/>
    <property type="evidence" value="ECO:0007669"/>
    <property type="project" value="UniProtKB-KW"/>
</dbReference>
<dbReference type="GO" id="GO:0005246">
    <property type="term" value="F:calcium channel regulator activity"/>
    <property type="evidence" value="ECO:0007669"/>
    <property type="project" value="UniProtKB-KW"/>
</dbReference>
<dbReference type="GO" id="GO:0008200">
    <property type="term" value="F:ion channel inhibitor activity"/>
    <property type="evidence" value="ECO:0007669"/>
    <property type="project" value="InterPro"/>
</dbReference>
<dbReference type="GO" id="GO:0090729">
    <property type="term" value="F:toxin activity"/>
    <property type="evidence" value="ECO:0007669"/>
    <property type="project" value="UniProtKB-KW"/>
</dbReference>
<dbReference type="InterPro" id="IPR012321">
    <property type="entry name" value="Conotoxin_omega-typ_CS"/>
</dbReference>
<dbReference type="SUPFAM" id="SSF57059">
    <property type="entry name" value="omega toxin-like"/>
    <property type="match status" value="1"/>
</dbReference>
<dbReference type="PROSITE" id="PS60004">
    <property type="entry name" value="OMEGA_CONOTOXIN"/>
    <property type="match status" value="1"/>
</dbReference>
<protein>
    <recommendedName>
        <fullName>Omega-conotoxin RVIA</fullName>
    </recommendedName>
</protein>
<keyword id="KW-0108">Calcium channel impairing toxin</keyword>
<keyword id="KW-0903">Direct protein sequencing</keyword>
<keyword id="KW-1015">Disulfide bond</keyword>
<keyword id="KW-0379">Hydroxylation</keyword>
<keyword id="KW-0872">Ion channel impairing toxin</keyword>
<keyword id="KW-0960">Knottin</keyword>
<keyword id="KW-0528">Neurotoxin</keyword>
<keyword id="KW-0638">Presynaptic neurotoxin</keyword>
<keyword id="KW-0964">Secreted</keyword>
<keyword id="KW-0800">Toxin</keyword>
<keyword id="KW-1218">Voltage-gated calcium channel impairing toxin</keyword>
<name>O16A_CONRA</name>